<accession>Q9HA72</accession>
<accession>D3DR94</accession>
<accession>O95893</accession>
<accession>Q6ZUV9</accession>
<sequence length="323" mass="36175">MAALIAENFRFLSLFFKSKDVMIFNGLVALGTVGSQELFSVVAFHCPCSPARNYLYGLAAIGVPALVLFIIGIILNNHTWNLVAECQHRRTKNCSAAPTFLLLSSILGRAAVAPVTWSVISLLRGEAYVCALSEFVDPSSLTAREEHFPSAHATEILARFPCKENPDNLSDFREEVSRRLRYESQLFGWLLIGVVAILVFLTKCLKHYCSPLSYRQEAYWAQYRANEDQLFQRTAEVHSRVLAANNVRRFFGFVALNKDDEELIANFPVEGTQPRPQWNAITGVYLYRENQGLPLYSRLHKWAQGLAGNGAAPDNVEMALLPS</sequence>
<gene>
    <name evidence="8 14" type="primary">CALHM2</name>
    <name type="synonym">FAM26B</name>
</gene>
<proteinExistence type="evidence at protein level"/>
<comment type="function">
    <text evidence="1 3 6">Pore-forming subunit of Ca(2+) homeostasis modulator channels. Mediates ATP release from astrocytes and ATP-induced Ca(2+) influx in microglia thus regulating neuronal ATP and Ca(2+) homeostasis, synaptic transmission and neuroinflammatory response. May form intercellular gap junctions. The gating mechanism remains unknown.</text>
</comment>
<comment type="catalytic activity">
    <reaction evidence="6">
        <text>ATP(in) = ATP(out)</text>
        <dbReference type="Rhea" id="RHEA:75687"/>
        <dbReference type="ChEBI" id="CHEBI:30616"/>
    </reaction>
    <physiologicalReaction direction="left-to-right" evidence="1">
        <dbReference type="Rhea" id="RHEA:75688"/>
    </physiologicalReaction>
</comment>
<comment type="activity regulation">
    <text evidence="3 6">Inhibited by Ca(2+) and ruthenium red in a voltage-dependent way.</text>
</comment>
<comment type="subunit">
    <text evidence="3 4 5">Homo-undecamer. Two undecameric hemichannels can assemble in a head-to-head manner to form a gap junction.</text>
</comment>
<comment type="subcellular location">
    <subcellularLocation>
        <location evidence="1">Cell membrane</location>
        <topology evidence="2">Multi-pass membrane protein</topology>
    </subcellularLocation>
</comment>
<comment type="alternative products">
    <event type="alternative splicing"/>
    <isoform>
        <id>Q9HA72-1</id>
        <name>1</name>
        <sequence type="displayed"/>
    </isoform>
    <isoform>
        <id>Q9HA72-2</id>
        <name>2</name>
        <sequence type="described" ref="VSP_013853 VSP_013854"/>
    </isoform>
    <isoform>
        <id>Q9HA72-3</id>
        <name>3</name>
        <sequence type="described" ref="VSP_013856 VSP_013855"/>
    </isoform>
</comment>
<comment type="tissue specificity">
    <text evidence="5">Placenta.</text>
</comment>
<comment type="similarity">
    <text evidence="10">Belongs to the CALHM family.</text>
</comment>
<comment type="caution">
    <text evidence="4 5">It remains controversial whether CALHM2 forms functional homomeric channels.</text>
</comment>
<protein>
    <recommendedName>
        <fullName evidence="8">Calcium homeostasis modulator protein 2</fullName>
    </recommendedName>
    <alternativeName>
        <fullName>Protein FAM26B</fullName>
    </alternativeName>
</protein>
<keyword id="KW-0002">3D-structure</keyword>
<keyword id="KW-0025">Alternative splicing</keyword>
<keyword id="KW-1003">Cell membrane</keyword>
<keyword id="KW-1015">Disulfide bond</keyword>
<keyword id="KW-0407">Ion channel</keyword>
<keyword id="KW-0406">Ion transport</keyword>
<keyword id="KW-0472">Membrane</keyword>
<keyword id="KW-1267">Proteomics identification</keyword>
<keyword id="KW-1185">Reference proteome</keyword>
<keyword id="KW-0812">Transmembrane</keyword>
<keyword id="KW-1133">Transmembrane helix</keyword>
<keyword id="KW-0813">Transport</keyword>
<feature type="chain" id="PRO_0000186720" description="Calcium homeostasis modulator protein 2">
    <location>
        <begin position="1"/>
        <end position="323"/>
    </location>
</feature>
<feature type="topological domain" description="Cytoplasmic" evidence="10">
    <location>
        <begin position="1"/>
        <end position="21"/>
    </location>
</feature>
<feature type="transmembrane region" description="Helical; Name=S1" evidence="3 16">
    <location>
        <begin position="22"/>
        <end position="43"/>
    </location>
</feature>
<feature type="topological domain" description="Extracellular" evidence="10">
    <location>
        <begin position="44"/>
        <end position="52"/>
    </location>
</feature>
<feature type="transmembrane region" description="Helical; Name=S2" evidence="3 16">
    <location>
        <begin position="53"/>
        <end position="76"/>
    </location>
</feature>
<feature type="topological domain" description="Cytoplasmic" evidence="10">
    <location>
        <begin position="77"/>
        <end position="101"/>
    </location>
</feature>
<feature type="transmembrane region" description="Helical; Name=S3" evidence="3 16">
    <location>
        <begin position="102"/>
        <end position="132"/>
    </location>
</feature>
<feature type="topological domain" description="Extracellular" evidence="10">
    <location>
        <begin position="133"/>
        <end position="179"/>
    </location>
</feature>
<feature type="transmembrane region" description="Helical; Name=S4" evidence="3 16">
    <location>
        <begin position="180"/>
        <end position="206"/>
    </location>
</feature>
<feature type="topological domain" description="Cytoplasmic" evidence="10">
    <location>
        <begin position="207"/>
        <end position="323"/>
    </location>
</feature>
<feature type="region of interest" description="Central pore" evidence="11 12 13">
    <location>
        <begin position="14"/>
        <end position="39"/>
    </location>
</feature>
<feature type="region of interest" description="Hemichannel docking" evidence="3 4 16">
    <location>
        <begin position="145"/>
        <end position="152"/>
    </location>
</feature>
<feature type="region of interest" description="Intersubunit interaction" evidence="3 16">
    <location>
        <begin position="214"/>
        <end position="251"/>
    </location>
</feature>
<feature type="site" description="Not N-glycosylated" evidence="3">
    <location>
        <position position="168"/>
    </location>
</feature>
<feature type="disulfide bond" evidence="3 4 15 16">
    <location>
        <begin position="46"/>
        <end position="130"/>
    </location>
</feature>
<feature type="disulfide bond" evidence="3 4 15 16">
    <location>
        <begin position="48"/>
        <end position="162"/>
    </location>
</feature>
<feature type="splice variant" id="VSP_013856" description="In isoform 3." evidence="9">
    <original>RYESQLFGWLLIGVVA</original>
    <variation>SSLDGCSSAWWPSWCS</variation>
    <location>
        <begin position="181"/>
        <end position="196"/>
    </location>
</feature>
<feature type="splice variant" id="VSP_013853" description="In isoform 2." evidence="7">
    <original>LFGWLLIGVVAILVFLTKCLKHYCSPLSYRQEA</original>
    <variation>VRSCAKGSSSSLVVAGERSGDGLVLKLGLVLRG</variation>
    <location>
        <begin position="186"/>
        <end position="218"/>
    </location>
</feature>
<feature type="splice variant" id="VSP_013855" description="In isoform 3." evidence="9">
    <location>
        <begin position="197"/>
        <end position="323"/>
    </location>
</feature>
<feature type="splice variant" id="VSP_013854" description="In isoform 2." evidence="7">
    <location>
        <begin position="219"/>
        <end position="323"/>
    </location>
</feature>
<feature type="sequence variant" id="VAR_053084" description="In dbSNP:rs2232660.">
    <original>V</original>
    <variation>G</variation>
    <location>
        <position position="136"/>
    </location>
</feature>
<feature type="sequence variant" id="VAR_033924" description="In dbSNP:rs2232662.">
    <original>V</original>
    <variation>M</variation>
    <location>
        <position position="194"/>
    </location>
</feature>
<feature type="mutagenesis site" description="Does not affect intrasubunit interactions." evidence="3">
    <location>
        <begin position="1"/>
        <end position="52"/>
    </location>
</feature>
<feature type="mutagenesis site" description="Markedly reduces the inhibition by ruthenium red. Does not affect Ca(2+)-dependent inactivation of the channel." evidence="3">
    <location>
        <begin position="1"/>
        <end position="20"/>
    </location>
</feature>
<feature type="mutagenesis site" description="Markedly reduces the inhibition by ruthenium red at negative membrane potentials. Does not affect Ca(2+)-dependent inactivation of the channel." evidence="3">
    <original>R</original>
    <variation>A</variation>
    <location>
        <position position="10"/>
    </location>
</feature>
<feature type="mutagenesis site" description="Reduces the inhibition by ruthenium red." evidence="3">
    <original>E</original>
    <variation>R</variation>
    <location>
        <position position="37"/>
    </location>
</feature>
<feature type="mutagenesis site" description="Prevents gap junction formation." evidence="3">
    <location>
        <begin position="143"/>
        <end position="146"/>
    </location>
</feature>
<feature type="mutagenesis site" description="Decreases intrasubunit interactions." evidence="3">
    <original>H</original>
    <variation>A</variation>
    <location>
        <position position="238"/>
    </location>
</feature>
<feature type="mutagenesis site" description="Decreases intrasubunit interactions." evidence="3">
    <original>F</original>
    <variation>A</variation>
    <location>
        <position position="251"/>
    </location>
</feature>
<feature type="helix" evidence="18">
    <location>
        <begin position="14"/>
        <end position="19"/>
    </location>
</feature>
<feature type="helix" evidence="18">
    <location>
        <begin position="24"/>
        <end position="41"/>
    </location>
</feature>
<feature type="turn" evidence="18">
    <location>
        <begin position="50"/>
        <end position="52"/>
    </location>
</feature>
<feature type="helix" evidence="18">
    <location>
        <begin position="53"/>
        <end position="75"/>
    </location>
</feature>
<feature type="helix" evidence="18">
    <location>
        <begin position="77"/>
        <end position="88"/>
    </location>
</feature>
<feature type="helix" evidence="17">
    <location>
        <begin position="89"/>
        <end position="91"/>
    </location>
</feature>
<feature type="helix" evidence="18">
    <location>
        <begin position="96"/>
        <end position="110"/>
    </location>
</feature>
<feature type="helix" evidence="18">
    <location>
        <begin position="112"/>
        <end position="124"/>
    </location>
</feature>
<feature type="helix" evidence="18">
    <location>
        <begin position="126"/>
        <end position="132"/>
    </location>
</feature>
<feature type="helix" evidence="19">
    <location>
        <begin position="133"/>
        <end position="135"/>
    </location>
</feature>
<feature type="helix" evidence="18">
    <location>
        <begin position="138"/>
        <end position="140"/>
    </location>
</feature>
<feature type="strand" evidence="18">
    <location>
        <begin position="150"/>
        <end position="152"/>
    </location>
</feature>
<feature type="helix" evidence="18">
    <location>
        <begin position="153"/>
        <end position="158"/>
    </location>
</feature>
<feature type="helix" evidence="18">
    <location>
        <begin position="160"/>
        <end position="162"/>
    </location>
</feature>
<feature type="helix" evidence="18">
    <location>
        <begin position="167"/>
        <end position="169"/>
    </location>
</feature>
<feature type="helix" evidence="18">
    <location>
        <begin position="170"/>
        <end position="209"/>
    </location>
</feature>
<feature type="helix" evidence="18">
    <location>
        <begin position="214"/>
        <end position="251"/>
    </location>
</feature>
<feature type="helix" evidence="18">
    <location>
        <begin position="258"/>
        <end position="266"/>
    </location>
</feature>
<feature type="helix" evidence="18">
    <location>
        <begin position="275"/>
        <end position="280"/>
    </location>
</feature>
<feature type="strand" evidence="17">
    <location>
        <begin position="288"/>
        <end position="295"/>
    </location>
</feature>
<feature type="helix" evidence="18">
    <location>
        <begin position="298"/>
        <end position="305"/>
    </location>
</feature>
<feature type="strand" evidence="19">
    <location>
        <begin position="315"/>
        <end position="321"/>
    </location>
</feature>
<reference key="1">
    <citation type="journal article" date="2004" name="Nat. Genet.">
        <title>Complete sequencing and characterization of 21,243 full-length human cDNAs.</title>
        <authorList>
            <person name="Ota T."/>
            <person name="Suzuki Y."/>
            <person name="Nishikawa T."/>
            <person name="Otsuki T."/>
            <person name="Sugiyama T."/>
            <person name="Irie R."/>
            <person name="Wakamatsu A."/>
            <person name="Hayashi K."/>
            <person name="Sato H."/>
            <person name="Nagai K."/>
            <person name="Kimura K."/>
            <person name="Makita H."/>
            <person name="Sekine M."/>
            <person name="Obayashi M."/>
            <person name="Nishi T."/>
            <person name="Shibahara T."/>
            <person name="Tanaka T."/>
            <person name="Ishii S."/>
            <person name="Yamamoto J."/>
            <person name="Saito K."/>
            <person name="Kawai Y."/>
            <person name="Isono Y."/>
            <person name="Nakamura Y."/>
            <person name="Nagahari K."/>
            <person name="Murakami K."/>
            <person name="Yasuda T."/>
            <person name="Iwayanagi T."/>
            <person name="Wagatsuma M."/>
            <person name="Shiratori A."/>
            <person name="Sudo H."/>
            <person name="Hosoiri T."/>
            <person name="Kaku Y."/>
            <person name="Kodaira H."/>
            <person name="Kondo H."/>
            <person name="Sugawara M."/>
            <person name="Takahashi M."/>
            <person name="Kanda K."/>
            <person name="Yokoi T."/>
            <person name="Furuya T."/>
            <person name="Kikkawa E."/>
            <person name="Omura Y."/>
            <person name="Abe K."/>
            <person name="Kamihara K."/>
            <person name="Katsuta N."/>
            <person name="Sato K."/>
            <person name="Tanikawa M."/>
            <person name="Yamazaki M."/>
            <person name="Ninomiya K."/>
            <person name="Ishibashi T."/>
            <person name="Yamashita H."/>
            <person name="Murakawa K."/>
            <person name="Fujimori K."/>
            <person name="Tanai H."/>
            <person name="Kimata M."/>
            <person name="Watanabe M."/>
            <person name="Hiraoka S."/>
            <person name="Chiba Y."/>
            <person name="Ishida S."/>
            <person name="Ono Y."/>
            <person name="Takiguchi S."/>
            <person name="Watanabe S."/>
            <person name="Yosida M."/>
            <person name="Hotuta T."/>
            <person name="Kusano J."/>
            <person name="Kanehori K."/>
            <person name="Takahashi-Fujii A."/>
            <person name="Hara H."/>
            <person name="Tanase T.-O."/>
            <person name="Nomura Y."/>
            <person name="Togiya S."/>
            <person name="Komai F."/>
            <person name="Hara R."/>
            <person name="Takeuchi K."/>
            <person name="Arita M."/>
            <person name="Imose N."/>
            <person name="Musashino K."/>
            <person name="Yuuki H."/>
            <person name="Oshima A."/>
            <person name="Sasaki N."/>
            <person name="Aotsuka S."/>
            <person name="Yoshikawa Y."/>
            <person name="Matsunawa H."/>
            <person name="Ichihara T."/>
            <person name="Shiohata N."/>
            <person name="Sano S."/>
            <person name="Moriya S."/>
            <person name="Momiyama H."/>
            <person name="Satoh N."/>
            <person name="Takami S."/>
            <person name="Terashima Y."/>
            <person name="Suzuki O."/>
            <person name="Nakagawa S."/>
            <person name="Senoh A."/>
            <person name="Mizoguchi H."/>
            <person name="Goto Y."/>
            <person name="Shimizu F."/>
            <person name="Wakebe H."/>
            <person name="Hishigaki H."/>
            <person name="Watanabe T."/>
            <person name="Sugiyama A."/>
            <person name="Takemoto M."/>
            <person name="Kawakami B."/>
            <person name="Yamazaki M."/>
            <person name="Watanabe K."/>
            <person name="Kumagai A."/>
            <person name="Itakura S."/>
            <person name="Fukuzumi Y."/>
            <person name="Fujimori Y."/>
            <person name="Komiyama M."/>
            <person name="Tashiro H."/>
            <person name="Tanigami A."/>
            <person name="Fujiwara T."/>
            <person name="Ono T."/>
            <person name="Yamada K."/>
            <person name="Fujii Y."/>
            <person name="Ozaki K."/>
            <person name="Hirao M."/>
            <person name="Ohmori Y."/>
            <person name="Kawabata A."/>
            <person name="Hikiji T."/>
            <person name="Kobatake N."/>
            <person name="Inagaki H."/>
            <person name="Ikema Y."/>
            <person name="Okamoto S."/>
            <person name="Okitani R."/>
            <person name="Kawakami T."/>
            <person name="Noguchi S."/>
            <person name="Itoh T."/>
            <person name="Shigeta K."/>
            <person name="Senba T."/>
            <person name="Matsumura K."/>
            <person name="Nakajima Y."/>
            <person name="Mizuno T."/>
            <person name="Morinaga M."/>
            <person name="Sasaki M."/>
            <person name="Togashi T."/>
            <person name="Oyama M."/>
            <person name="Hata H."/>
            <person name="Watanabe M."/>
            <person name="Komatsu T."/>
            <person name="Mizushima-Sugano J."/>
            <person name="Satoh T."/>
            <person name="Shirai Y."/>
            <person name="Takahashi Y."/>
            <person name="Nakagawa K."/>
            <person name="Okumura K."/>
            <person name="Nagase T."/>
            <person name="Nomura N."/>
            <person name="Kikuchi H."/>
            <person name="Masuho Y."/>
            <person name="Yamashita R."/>
            <person name="Nakai K."/>
            <person name="Yada T."/>
            <person name="Nakamura Y."/>
            <person name="Ohara O."/>
            <person name="Isogai T."/>
            <person name="Sugano S."/>
        </authorList>
    </citation>
    <scope>NUCLEOTIDE SEQUENCE [LARGE SCALE MRNA] (ISOFORMS 1 AND 2)</scope>
</reference>
<reference key="2">
    <citation type="submission" date="1999-02" db="EMBL/GenBank/DDBJ databases">
        <authorList>
            <person name="Mei G."/>
            <person name="Yu W."/>
            <person name="Gibbs R.A."/>
        </authorList>
    </citation>
    <scope>NUCLEOTIDE SEQUENCE [LARGE SCALE MRNA] (ISOFORM 3)</scope>
    <source>
        <tissue>Brain</tissue>
    </source>
</reference>
<reference key="3">
    <citation type="journal article" date="2004" name="Nature">
        <title>The DNA sequence and comparative analysis of human chromosome 10.</title>
        <authorList>
            <person name="Deloukas P."/>
            <person name="Earthrowl M.E."/>
            <person name="Grafham D.V."/>
            <person name="Rubenfield M."/>
            <person name="French L."/>
            <person name="Steward C.A."/>
            <person name="Sims S.K."/>
            <person name="Jones M.C."/>
            <person name="Searle S."/>
            <person name="Scott C."/>
            <person name="Howe K."/>
            <person name="Hunt S.E."/>
            <person name="Andrews T.D."/>
            <person name="Gilbert J.G.R."/>
            <person name="Swarbreck D."/>
            <person name="Ashurst J.L."/>
            <person name="Taylor A."/>
            <person name="Battles J."/>
            <person name="Bird C.P."/>
            <person name="Ainscough R."/>
            <person name="Almeida J.P."/>
            <person name="Ashwell R.I.S."/>
            <person name="Ambrose K.D."/>
            <person name="Babbage A.K."/>
            <person name="Bagguley C.L."/>
            <person name="Bailey J."/>
            <person name="Banerjee R."/>
            <person name="Bates K."/>
            <person name="Beasley H."/>
            <person name="Bray-Allen S."/>
            <person name="Brown A.J."/>
            <person name="Brown J.Y."/>
            <person name="Burford D.C."/>
            <person name="Burrill W."/>
            <person name="Burton J."/>
            <person name="Cahill P."/>
            <person name="Camire D."/>
            <person name="Carter N.P."/>
            <person name="Chapman J.C."/>
            <person name="Clark S.Y."/>
            <person name="Clarke G."/>
            <person name="Clee C.M."/>
            <person name="Clegg S."/>
            <person name="Corby N."/>
            <person name="Coulson A."/>
            <person name="Dhami P."/>
            <person name="Dutta I."/>
            <person name="Dunn M."/>
            <person name="Faulkner L."/>
            <person name="Frankish A."/>
            <person name="Frankland J.A."/>
            <person name="Garner P."/>
            <person name="Garnett J."/>
            <person name="Gribble S."/>
            <person name="Griffiths C."/>
            <person name="Grocock R."/>
            <person name="Gustafson E."/>
            <person name="Hammond S."/>
            <person name="Harley J.L."/>
            <person name="Hart E."/>
            <person name="Heath P.D."/>
            <person name="Ho T.P."/>
            <person name="Hopkins B."/>
            <person name="Horne J."/>
            <person name="Howden P.J."/>
            <person name="Huckle E."/>
            <person name="Hynds C."/>
            <person name="Johnson C."/>
            <person name="Johnson D."/>
            <person name="Kana A."/>
            <person name="Kay M."/>
            <person name="Kimberley A.M."/>
            <person name="Kershaw J.K."/>
            <person name="Kokkinaki M."/>
            <person name="Laird G.K."/>
            <person name="Lawlor S."/>
            <person name="Lee H.M."/>
            <person name="Leongamornlert D.A."/>
            <person name="Laird G."/>
            <person name="Lloyd C."/>
            <person name="Lloyd D.M."/>
            <person name="Loveland J."/>
            <person name="Lovell J."/>
            <person name="McLaren S."/>
            <person name="McLay K.E."/>
            <person name="McMurray A."/>
            <person name="Mashreghi-Mohammadi M."/>
            <person name="Matthews L."/>
            <person name="Milne S."/>
            <person name="Nickerson T."/>
            <person name="Nguyen M."/>
            <person name="Overton-Larty E."/>
            <person name="Palmer S.A."/>
            <person name="Pearce A.V."/>
            <person name="Peck A.I."/>
            <person name="Pelan S."/>
            <person name="Phillimore B."/>
            <person name="Porter K."/>
            <person name="Rice C.M."/>
            <person name="Rogosin A."/>
            <person name="Ross M.T."/>
            <person name="Sarafidou T."/>
            <person name="Sehra H.K."/>
            <person name="Shownkeen R."/>
            <person name="Skuce C.D."/>
            <person name="Smith M."/>
            <person name="Standring L."/>
            <person name="Sycamore N."/>
            <person name="Tester J."/>
            <person name="Thorpe A."/>
            <person name="Torcasso W."/>
            <person name="Tracey A."/>
            <person name="Tromans A."/>
            <person name="Tsolas J."/>
            <person name="Wall M."/>
            <person name="Walsh J."/>
            <person name="Wang H."/>
            <person name="Weinstock K."/>
            <person name="West A.P."/>
            <person name="Willey D.L."/>
            <person name="Whitehead S.L."/>
            <person name="Wilming L."/>
            <person name="Wray P.W."/>
            <person name="Young L."/>
            <person name="Chen Y."/>
            <person name="Lovering R.C."/>
            <person name="Moschonas N.K."/>
            <person name="Siebert R."/>
            <person name="Fechtel K."/>
            <person name="Bentley D."/>
            <person name="Durbin R.M."/>
            <person name="Hubbard T."/>
            <person name="Doucette-Stamm L."/>
            <person name="Beck S."/>
            <person name="Smith D.R."/>
            <person name="Rogers J."/>
        </authorList>
    </citation>
    <scope>NUCLEOTIDE SEQUENCE [LARGE SCALE GENOMIC DNA]</scope>
</reference>
<reference key="4">
    <citation type="submission" date="2005-09" db="EMBL/GenBank/DDBJ databases">
        <authorList>
            <person name="Mural R.J."/>
            <person name="Istrail S."/>
            <person name="Sutton G.G."/>
            <person name="Florea L."/>
            <person name="Halpern A.L."/>
            <person name="Mobarry C.M."/>
            <person name="Lippert R."/>
            <person name="Walenz B."/>
            <person name="Shatkay H."/>
            <person name="Dew I."/>
            <person name="Miller J.R."/>
            <person name="Flanigan M.J."/>
            <person name="Edwards N.J."/>
            <person name="Bolanos R."/>
            <person name="Fasulo D."/>
            <person name="Halldorsson B.V."/>
            <person name="Hannenhalli S."/>
            <person name="Turner R."/>
            <person name="Yooseph S."/>
            <person name="Lu F."/>
            <person name="Nusskern D.R."/>
            <person name="Shue B.C."/>
            <person name="Zheng X.H."/>
            <person name="Zhong F."/>
            <person name="Delcher A.L."/>
            <person name="Huson D.H."/>
            <person name="Kravitz S.A."/>
            <person name="Mouchard L."/>
            <person name="Reinert K."/>
            <person name="Remington K.A."/>
            <person name="Clark A.G."/>
            <person name="Waterman M.S."/>
            <person name="Eichler E.E."/>
            <person name="Adams M.D."/>
            <person name="Hunkapiller M.W."/>
            <person name="Myers E.W."/>
            <person name="Venter J.C."/>
        </authorList>
    </citation>
    <scope>NUCLEOTIDE SEQUENCE [LARGE SCALE GENOMIC DNA]</scope>
</reference>
<reference key="5">
    <citation type="journal article" date="2004" name="Genome Res.">
        <title>The status, quality, and expansion of the NIH full-length cDNA project: the Mammalian Gene Collection (MGC).</title>
        <authorList>
            <consortium name="The MGC Project Team"/>
        </authorList>
    </citation>
    <scope>NUCLEOTIDE SEQUENCE [LARGE SCALE MRNA] (ISOFORM 1)</scope>
    <source>
        <tissue>Brain</tissue>
    </source>
</reference>
<reference key="6">
    <citation type="journal article" date="2008" name="Cell">
        <title>A polymorphism in CALHM1 influences Ca2+ homeostasis, Abeta levels, and Alzheimer's disease risk.</title>
        <authorList>
            <person name="Dreses-Werringloer U."/>
            <person name="Lambert J.-C."/>
            <person name="Vingtdeux V."/>
            <person name="Zhao H."/>
            <person name="Vais H."/>
            <person name="Siebert A."/>
            <person name="Jain A."/>
            <person name="Koppel J."/>
            <person name="Rovelet-Lecrux A."/>
            <person name="Hannequin D."/>
            <person name="Pasquier F."/>
            <person name="Galimberti D."/>
            <person name="Scarpini E."/>
            <person name="Mann D."/>
            <person name="Lendon C."/>
            <person name="Campion D."/>
            <person name="Amouyel P."/>
            <person name="Davies P."/>
            <person name="Foskett J.K."/>
            <person name="Campagne F."/>
            <person name="Marambaud P."/>
        </authorList>
    </citation>
    <scope>IDENTIFICATION</scope>
</reference>
<reference key="7">
    <citation type="journal article" date="2020" name="Elife">
        <title>Cryo-EM structures and functional properties of CALHM channels of the human placenta.</title>
        <authorList>
            <person name="Drozdzyk K."/>
            <person name="Sawicka M."/>
            <person name="Bahamonde-Santos M.I."/>
            <person name="Jonas Z."/>
            <person name="Deneka D."/>
            <person name="Albrecht C."/>
            <person name="Dutzler R."/>
        </authorList>
    </citation>
    <scope>SUBUNIT</scope>
    <scope>TISSUE SPECIFICITY</scope>
    <scope>CAUTION</scope>
</reference>
<reference key="8">
    <citation type="journal article" date="2019" name="Nature">
        <title>The structures and gating mechanism of human calcium homeostasis modulator2.</title>
        <authorList>
            <person name="Choi W."/>
            <person name="Clemente N."/>
            <person name="Sun W."/>
            <person name="Du J."/>
            <person name="Lu W."/>
        </authorList>
    </citation>
    <scope>STRUCTURE BY ELECTRON MICROSCOPY (2.70 ANGSTROMS)</scope>
    <scope>DISULFIDE BOND</scope>
    <scope>SUBUNIT</scope>
    <scope>REGION</scope>
    <scope>FUNCTION</scope>
    <scope>ACTIVITY REGULATION</scope>
    <scope>TOPOLOGY</scope>
    <scope>SITE</scope>
    <scope>MUTAGENESIS OF 1-MET--ARG-52; 1-MET--ASP-20; ARG-10; GLU-37; 143-ALA--GLU-146; HIS-238 AND PHE-251</scope>
</reference>
<reference key="9">
    <citation type="journal article" date="2020" name="Nat. Struct. Mol. Biol.">
        <title>Structure and assembly of calcium homeostasis modulator proteins.</title>
        <authorList>
            <person name="Syrjanen J.L."/>
            <person name="Michalski K."/>
            <person name="Chou T.H."/>
            <person name="Grant T."/>
            <person name="Rao S."/>
            <person name="Simorowski N."/>
            <person name="Tucker S.J."/>
            <person name="Grigorieff N."/>
            <person name="Furukawa H."/>
        </authorList>
    </citation>
    <scope>STRUCTURE BY ELECTRON MICROSCOPY (3.48 ANGSTROMS)</scope>
    <scope>DISULFIDE BOND</scope>
    <scope>SUBUNIT</scope>
    <scope>REGION</scope>
    <scope>CAUTION</scope>
</reference>
<reference key="10">
    <citation type="journal article" date="2020" name="Sci. Adv.">
        <title>Cryo-EM structures of calcium homeostasis modulator channels in diverse oligomeric assemblies.</title>
        <authorList>
            <person name="Demura K."/>
            <person name="Kusakizako T."/>
            <person name="Shihoya W."/>
            <person name="Hiraizumi M."/>
            <person name="Nomura K."/>
            <person name="Shimada H."/>
            <person name="Yamashita K."/>
            <person name="Nishizawa T."/>
            <person name="Taruno A."/>
            <person name="Nureki O."/>
        </authorList>
    </citation>
    <scope>STRUCTURE BY ELECTRON MICROSCOPY (3.40 ANGSTROMS) OF 213-323</scope>
    <scope>FUNCTION</scope>
    <scope>TRANSPORTER ACTIVITY</scope>
    <scope>ACTIVITY REGULATION</scope>
    <scope>REGION</scope>
</reference>
<dbReference type="EMBL" id="AK022195">
    <property type="protein sequence ID" value="BAB13983.1"/>
    <property type="molecule type" value="mRNA"/>
</dbReference>
<dbReference type="EMBL" id="AK125276">
    <property type="status" value="NOT_ANNOTATED_CDS"/>
    <property type="molecule type" value="mRNA"/>
</dbReference>
<dbReference type="EMBL" id="AF131810">
    <property type="protein sequence ID" value="AAD20050.1"/>
    <property type="molecule type" value="mRNA"/>
</dbReference>
<dbReference type="EMBL" id="AL139339">
    <property type="status" value="NOT_ANNOTATED_CDS"/>
    <property type="molecule type" value="Genomic_DNA"/>
</dbReference>
<dbReference type="EMBL" id="CH471066">
    <property type="protein sequence ID" value="EAW49634.1"/>
    <property type="molecule type" value="Genomic_DNA"/>
</dbReference>
<dbReference type="EMBL" id="CH471066">
    <property type="protein sequence ID" value="EAW49635.1"/>
    <property type="molecule type" value="Genomic_DNA"/>
</dbReference>
<dbReference type="EMBL" id="CH471066">
    <property type="protein sequence ID" value="EAW49636.1"/>
    <property type="molecule type" value="Genomic_DNA"/>
</dbReference>
<dbReference type="EMBL" id="CH471066">
    <property type="protein sequence ID" value="EAW49637.1"/>
    <property type="molecule type" value="Genomic_DNA"/>
</dbReference>
<dbReference type="EMBL" id="CH471066">
    <property type="protein sequence ID" value="EAW49638.1"/>
    <property type="molecule type" value="Genomic_DNA"/>
</dbReference>
<dbReference type="EMBL" id="BC000039">
    <property type="protein sequence ID" value="AAH00039.1"/>
    <property type="molecule type" value="mRNA"/>
</dbReference>
<dbReference type="CCDS" id="CCDS7549.1">
    <molecule id="Q9HA72-1"/>
</dbReference>
<dbReference type="RefSeq" id="NP_057000.2">
    <molecule id="Q9HA72-1"/>
    <property type="nucleotide sequence ID" value="NM_015916.4"/>
</dbReference>
<dbReference type="RefSeq" id="XP_006717943.1">
    <molecule id="Q9HA72-1"/>
    <property type="nucleotide sequence ID" value="XM_006717880.3"/>
</dbReference>
<dbReference type="RefSeq" id="XP_006717946.1">
    <molecule id="Q9HA72-1"/>
    <property type="nucleotide sequence ID" value="XM_006717883.3"/>
</dbReference>
<dbReference type="RefSeq" id="XP_006717947.1">
    <molecule id="Q9HA72-3"/>
    <property type="nucleotide sequence ID" value="XM_006717884.5"/>
</dbReference>
<dbReference type="RefSeq" id="XP_011538150.1">
    <molecule id="Q9HA72-1"/>
    <property type="nucleotide sequence ID" value="XM_011539848.3"/>
</dbReference>
<dbReference type="RefSeq" id="XP_016871795.1">
    <molecule id="Q9HA72-1"/>
    <property type="nucleotide sequence ID" value="XM_017016306.2"/>
</dbReference>
<dbReference type="RefSeq" id="XP_016871796.1">
    <molecule id="Q9HA72-1"/>
    <property type="nucleotide sequence ID" value="XM_017016307.2"/>
</dbReference>
<dbReference type="RefSeq" id="XP_016871797.1">
    <molecule id="Q9HA72-3"/>
    <property type="nucleotide sequence ID" value="XM_017016308.3"/>
</dbReference>
<dbReference type="RefSeq" id="XP_016871798.1">
    <molecule id="Q9HA72-3"/>
    <property type="nucleotide sequence ID" value="XM_017016309.3"/>
</dbReference>
<dbReference type="RefSeq" id="XP_024303802.1">
    <molecule id="Q9HA72-1"/>
    <property type="nucleotide sequence ID" value="XM_024448034.2"/>
</dbReference>
<dbReference type="RefSeq" id="XP_024303803.1">
    <molecule id="Q9HA72-3"/>
    <property type="nucleotide sequence ID" value="XM_024448035.2"/>
</dbReference>
<dbReference type="RefSeq" id="XP_047281221.1">
    <molecule id="Q9HA72-1"/>
    <property type="nucleotide sequence ID" value="XM_047425265.1"/>
</dbReference>
<dbReference type="RefSeq" id="XP_047281222.1">
    <molecule id="Q9HA72-1"/>
    <property type="nucleotide sequence ID" value="XM_047425266.1"/>
</dbReference>
<dbReference type="RefSeq" id="XP_047281223.1">
    <molecule id="Q9HA72-1"/>
    <property type="nucleotide sequence ID" value="XM_047425267.1"/>
</dbReference>
<dbReference type="RefSeq" id="XP_047281224.1">
    <molecule id="Q9HA72-1"/>
    <property type="nucleotide sequence ID" value="XM_047425268.1"/>
</dbReference>
<dbReference type="RefSeq" id="XP_047281225.1">
    <molecule id="Q9HA72-1"/>
    <property type="nucleotide sequence ID" value="XM_047425269.1"/>
</dbReference>
<dbReference type="RefSeq" id="XP_047281226.1">
    <molecule id="Q9HA72-1"/>
    <property type="nucleotide sequence ID" value="XM_047425270.1"/>
</dbReference>
<dbReference type="RefSeq" id="XP_047281227.1">
    <molecule id="Q9HA72-1"/>
    <property type="nucleotide sequence ID" value="XM_047425271.1"/>
</dbReference>
<dbReference type="RefSeq" id="XP_047281228.1">
    <molecule id="Q9HA72-1"/>
    <property type="nucleotide sequence ID" value="XM_047425272.1"/>
</dbReference>
<dbReference type="RefSeq" id="XP_047281230.1">
    <molecule id="Q9HA72-3"/>
    <property type="nucleotide sequence ID" value="XM_047425274.1"/>
</dbReference>
<dbReference type="RefSeq" id="XP_047281231.1">
    <molecule id="Q9HA72-3"/>
    <property type="nucleotide sequence ID" value="XM_047425275.1"/>
</dbReference>
<dbReference type="RefSeq" id="XP_047281232.1">
    <molecule id="Q9HA72-3"/>
    <property type="nucleotide sequence ID" value="XM_047425276.1"/>
</dbReference>
<dbReference type="RefSeq" id="XP_047281233.1">
    <molecule id="Q9HA72-3"/>
    <property type="nucleotide sequence ID" value="XM_047425277.1"/>
</dbReference>
<dbReference type="RefSeq" id="XP_047281234.1">
    <molecule id="Q9HA72-3"/>
    <property type="nucleotide sequence ID" value="XM_047425278.1"/>
</dbReference>
<dbReference type="RefSeq" id="XP_047281235.1">
    <molecule id="Q9HA72-3"/>
    <property type="nucleotide sequence ID" value="XM_047425279.1"/>
</dbReference>
<dbReference type="RefSeq" id="XP_047281236.1">
    <molecule id="Q9HA72-3"/>
    <property type="nucleotide sequence ID" value="XM_047425280.1"/>
</dbReference>
<dbReference type="RefSeq" id="XP_047281237.1">
    <molecule id="Q9HA72-3"/>
    <property type="nucleotide sequence ID" value="XM_047425281.1"/>
</dbReference>
<dbReference type="RefSeq" id="XP_047281238.1">
    <molecule id="Q9HA72-3"/>
    <property type="nucleotide sequence ID" value="XM_047425282.1"/>
</dbReference>
<dbReference type="RefSeq" id="XP_054221952.1">
    <molecule id="Q9HA72-1"/>
    <property type="nucleotide sequence ID" value="XM_054365977.1"/>
</dbReference>
<dbReference type="RefSeq" id="XP_054221953.1">
    <molecule id="Q9HA72-1"/>
    <property type="nucleotide sequence ID" value="XM_054365978.1"/>
</dbReference>
<dbReference type="RefSeq" id="XP_054221954.1">
    <molecule id="Q9HA72-1"/>
    <property type="nucleotide sequence ID" value="XM_054365979.1"/>
</dbReference>
<dbReference type="RefSeq" id="XP_054221955.1">
    <molecule id="Q9HA72-1"/>
    <property type="nucleotide sequence ID" value="XM_054365980.1"/>
</dbReference>
<dbReference type="RefSeq" id="XP_054221956.1">
    <molecule id="Q9HA72-1"/>
    <property type="nucleotide sequence ID" value="XM_054365981.1"/>
</dbReference>
<dbReference type="RefSeq" id="XP_054221957.1">
    <molecule id="Q9HA72-1"/>
    <property type="nucleotide sequence ID" value="XM_054365982.1"/>
</dbReference>
<dbReference type="RefSeq" id="XP_054221958.1">
    <molecule id="Q9HA72-1"/>
    <property type="nucleotide sequence ID" value="XM_054365983.1"/>
</dbReference>
<dbReference type="RefSeq" id="XP_054221959.1">
    <molecule id="Q9HA72-1"/>
    <property type="nucleotide sequence ID" value="XM_054365984.1"/>
</dbReference>
<dbReference type="RefSeq" id="XP_054221960.1">
    <molecule id="Q9HA72-1"/>
    <property type="nucleotide sequence ID" value="XM_054365985.1"/>
</dbReference>
<dbReference type="RefSeq" id="XP_054221961.1">
    <molecule id="Q9HA72-1"/>
    <property type="nucleotide sequence ID" value="XM_054365986.1"/>
</dbReference>
<dbReference type="RefSeq" id="XP_054221962.1">
    <molecule id="Q9HA72-1"/>
    <property type="nucleotide sequence ID" value="XM_054365987.1"/>
</dbReference>
<dbReference type="RefSeq" id="XP_054221963.1">
    <molecule id="Q9HA72-1"/>
    <property type="nucleotide sequence ID" value="XM_054365988.1"/>
</dbReference>
<dbReference type="RefSeq" id="XP_054221964.1">
    <molecule id="Q9HA72-1"/>
    <property type="nucleotide sequence ID" value="XM_054365989.1"/>
</dbReference>
<dbReference type="RefSeq" id="XP_054221965.1">
    <molecule id="Q9HA72-1"/>
    <property type="nucleotide sequence ID" value="XM_054365990.1"/>
</dbReference>
<dbReference type="RefSeq" id="XP_054221966.1">
    <molecule id="Q9HA72-3"/>
    <property type="nucleotide sequence ID" value="XM_054365991.1"/>
</dbReference>
<dbReference type="RefSeq" id="XP_054221967.1">
    <molecule id="Q9HA72-3"/>
    <property type="nucleotide sequence ID" value="XM_054365992.1"/>
</dbReference>
<dbReference type="RefSeq" id="XP_054221968.1">
    <molecule id="Q9HA72-3"/>
    <property type="nucleotide sequence ID" value="XM_054365993.1"/>
</dbReference>
<dbReference type="RefSeq" id="XP_054221969.1">
    <molecule id="Q9HA72-3"/>
    <property type="nucleotide sequence ID" value="XM_054365994.1"/>
</dbReference>
<dbReference type="RefSeq" id="XP_054221970.1">
    <molecule id="Q9HA72-3"/>
    <property type="nucleotide sequence ID" value="XM_054365995.1"/>
</dbReference>
<dbReference type="RefSeq" id="XP_054221971.1">
    <molecule id="Q9HA72-3"/>
    <property type="nucleotide sequence ID" value="XM_054365996.1"/>
</dbReference>
<dbReference type="RefSeq" id="XP_054221972.1">
    <molecule id="Q9HA72-3"/>
    <property type="nucleotide sequence ID" value="XM_054365997.1"/>
</dbReference>
<dbReference type="RefSeq" id="XP_054221973.1">
    <molecule id="Q9HA72-3"/>
    <property type="nucleotide sequence ID" value="XM_054365998.1"/>
</dbReference>
<dbReference type="RefSeq" id="XP_054221974.1">
    <molecule id="Q9HA72-3"/>
    <property type="nucleotide sequence ID" value="XM_054365999.1"/>
</dbReference>
<dbReference type="RefSeq" id="XP_054221975.1">
    <molecule id="Q9HA72-3"/>
    <property type="nucleotide sequence ID" value="XM_054366000.1"/>
</dbReference>
<dbReference type="RefSeq" id="XP_054221976.1">
    <molecule id="Q9HA72-3"/>
    <property type="nucleotide sequence ID" value="XM_054366001.1"/>
</dbReference>
<dbReference type="RefSeq" id="XP_054221977.1">
    <molecule id="Q9HA72-3"/>
    <property type="nucleotide sequence ID" value="XM_054366002.1"/>
</dbReference>
<dbReference type="RefSeq" id="XP_054221978.1">
    <molecule id="Q9HA72-3"/>
    <property type="nucleotide sequence ID" value="XM_054366003.1"/>
</dbReference>
<dbReference type="PDB" id="6LMU">
    <property type="method" value="EM"/>
    <property type="resolution" value="3.40 A"/>
    <property type="chains" value="A/B/C/D/E/F/G/H/I/J/K=1-323"/>
</dbReference>
<dbReference type="PDB" id="6LMW">
    <property type="method" value="EM"/>
    <property type="resolution" value="3.40 A"/>
    <property type="chains" value="A/B/C/D/E/F/G/H=213-323"/>
</dbReference>
<dbReference type="PDB" id="6LMX">
    <property type="method" value="EM"/>
    <property type="resolution" value="3.40 A"/>
    <property type="chains" value="A/B/C/D/E/F/G/H/I=213-323"/>
</dbReference>
<dbReference type="PDB" id="6UIV">
    <property type="method" value="EM"/>
    <property type="resolution" value="3.30 A"/>
    <property type="chains" value="A/B/C/D/E/F/G/H/I/J/K=1-323"/>
</dbReference>
<dbReference type="PDB" id="6UIW">
    <property type="method" value="EM"/>
    <property type="resolution" value="2.70 A"/>
    <property type="chains" value="A/B/C/D/E/F/G/H/I/J/K=1-323"/>
</dbReference>
<dbReference type="PDB" id="6UIX">
    <property type="method" value="EM"/>
    <property type="resolution" value="3.50 A"/>
    <property type="chains" value="A/B/C/D/E/F/G/H/I/J/K/L/M/N/O/P/Q/R/S/T/U/V=1-323"/>
</dbReference>
<dbReference type="PDB" id="6VAI">
    <property type="method" value="EM"/>
    <property type="resolution" value="3.68 A"/>
    <property type="chains" value="A/B/C/D/E/F/G/H/I/J/K/L/M/N/O/P/Q/R/S/T/U/V=2-323"/>
</dbReference>
<dbReference type="PDB" id="6VAK">
    <property type="method" value="EM"/>
    <property type="resolution" value="3.48 A"/>
    <property type="chains" value="A/B/C/D/E/F/G/H/I/J/K=1-323"/>
</dbReference>
<dbReference type="PDB" id="6VAL">
    <property type="method" value="EM"/>
    <property type="resolution" value="3.87 A"/>
    <property type="chains" value="A/B/C/D/E/F/G/H/I/J/K=7-323"/>
</dbReference>
<dbReference type="PDB" id="8RMK">
    <property type="method" value="EM"/>
    <property type="resolution" value="3.07 A"/>
    <property type="chains" value="A/B/C/D/E/F/G/H/I/J/K=2-323"/>
</dbReference>
<dbReference type="PDB" id="8RML">
    <property type="method" value="EM"/>
    <property type="resolution" value="3.84 A"/>
    <property type="chains" value="C/D/E/F/G/H/I/J=2-323"/>
</dbReference>
<dbReference type="PDB" id="8RMM">
    <property type="method" value="EM"/>
    <property type="resolution" value="3.26 A"/>
    <property type="chains" value="C/D/E/F/G/H/I/J=2-323"/>
</dbReference>
<dbReference type="PDBsum" id="6LMU"/>
<dbReference type="PDBsum" id="6LMW"/>
<dbReference type="PDBsum" id="6LMX"/>
<dbReference type="PDBsum" id="6UIV"/>
<dbReference type="PDBsum" id="6UIW"/>
<dbReference type="PDBsum" id="6UIX"/>
<dbReference type="PDBsum" id="6VAI"/>
<dbReference type="PDBsum" id="6VAK"/>
<dbReference type="PDBsum" id="6VAL"/>
<dbReference type="PDBsum" id="8RMK"/>
<dbReference type="PDBsum" id="8RML"/>
<dbReference type="PDBsum" id="8RMM"/>
<dbReference type="EMDB" id="EMD-0920"/>
<dbReference type="EMDB" id="EMD-0922"/>
<dbReference type="EMDB" id="EMD-0923"/>
<dbReference type="EMDB" id="EMD-19362"/>
<dbReference type="EMDB" id="EMD-19363"/>
<dbReference type="EMDB" id="EMD-19364"/>
<dbReference type="EMDB" id="EMD-20788"/>
<dbReference type="EMDB" id="EMD-20789"/>
<dbReference type="EMDB" id="EMD-20790"/>
<dbReference type="EMDB" id="EMD-21140"/>
<dbReference type="EMDB" id="EMD-21141"/>
<dbReference type="EMDB" id="EMD-21142"/>
<dbReference type="SMR" id="Q9HA72"/>
<dbReference type="BioGRID" id="119255">
    <property type="interactions" value="4"/>
</dbReference>
<dbReference type="FunCoup" id="Q9HA72">
    <property type="interactions" value="23"/>
</dbReference>
<dbReference type="IntAct" id="Q9HA72">
    <property type="interactions" value="4"/>
</dbReference>
<dbReference type="STRING" id="9606.ENSP00000260743"/>
<dbReference type="TCDB" id="1.A.84.1.2">
    <property type="family name" value="the calcium homeostasis modulator ca(2+) channel (calhm-c) family"/>
</dbReference>
<dbReference type="PhosphoSitePlus" id="Q9HA72"/>
<dbReference type="SwissPalm" id="Q9HA72"/>
<dbReference type="BioMuta" id="CALHM2"/>
<dbReference type="DMDM" id="67461081"/>
<dbReference type="jPOST" id="Q9HA72"/>
<dbReference type="MassIVE" id="Q9HA72"/>
<dbReference type="PaxDb" id="9606-ENSP00000260743"/>
<dbReference type="PeptideAtlas" id="Q9HA72"/>
<dbReference type="ProteomicsDB" id="81380">
    <molecule id="Q9HA72-1"/>
</dbReference>
<dbReference type="ProteomicsDB" id="81381">
    <molecule id="Q9HA72-2"/>
</dbReference>
<dbReference type="ProteomicsDB" id="81382">
    <molecule id="Q9HA72-3"/>
</dbReference>
<dbReference type="Pumba" id="Q9HA72"/>
<dbReference type="Antibodypedia" id="18174">
    <property type="antibodies" value="22 antibodies from 12 providers"/>
</dbReference>
<dbReference type="DNASU" id="51063"/>
<dbReference type="Ensembl" id="ENST00000260743.10">
    <molecule id="Q9HA72-1"/>
    <property type="protein sequence ID" value="ENSP00000260743.5"/>
    <property type="gene ID" value="ENSG00000138172.11"/>
</dbReference>
<dbReference type="Ensembl" id="ENST00000369788.7">
    <molecule id="Q9HA72-1"/>
    <property type="protein sequence ID" value="ENSP00000358803.3"/>
    <property type="gene ID" value="ENSG00000138172.11"/>
</dbReference>
<dbReference type="GeneID" id="51063"/>
<dbReference type="KEGG" id="hsa:51063"/>
<dbReference type="MANE-Select" id="ENST00000260743.10">
    <property type="protein sequence ID" value="ENSP00000260743.5"/>
    <property type="RefSeq nucleotide sequence ID" value="NM_015916.5"/>
    <property type="RefSeq protein sequence ID" value="NP_057000.2"/>
</dbReference>
<dbReference type="UCSC" id="uc001kxa.4">
    <molecule id="Q9HA72-1"/>
    <property type="organism name" value="human"/>
</dbReference>
<dbReference type="AGR" id="HGNC:23493"/>
<dbReference type="CTD" id="51063"/>
<dbReference type="DisGeNET" id="51063"/>
<dbReference type="GeneCards" id="CALHM2"/>
<dbReference type="HGNC" id="HGNC:23493">
    <property type="gene designation" value="CALHM2"/>
</dbReference>
<dbReference type="HPA" id="ENSG00000138172">
    <property type="expression patterns" value="Low tissue specificity"/>
</dbReference>
<dbReference type="MIM" id="612235">
    <property type="type" value="gene"/>
</dbReference>
<dbReference type="neXtProt" id="NX_Q9HA72"/>
<dbReference type="OpenTargets" id="ENSG00000138172"/>
<dbReference type="PharmGKB" id="PA162380963"/>
<dbReference type="VEuPathDB" id="HostDB:ENSG00000138172"/>
<dbReference type="eggNOG" id="ENOG502QVU7">
    <property type="taxonomic scope" value="Eukaryota"/>
</dbReference>
<dbReference type="GeneTree" id="ENSGT01030000234610"/>
<dbReference type="HOGENOM" id="CLU_069286_1_0_1"/>
<dbReference type="InParanoid" id="Q9HA72"/>
<dbReference type="OMA" id="LNTHTWN"/>
<dbReference type="OrthoDB" id="9865653at2759"/>
<dbReference type="PAN-GO" id="Q9HA72">
    <property type="GO annotations" value="2 GO annotations based on evolutionary models"/>
</dbReference>
<dbReference type="PhylomeDB" id="Q9HA72"/>
<dbReference type="TreeFam" id="TF329085"/>
<dbReference type="PathwayCommons" id="Q9HA72"/>
<dbReference type="BioGRID-ORCS" id="51063">
    <property type="hits" value="32 hits in 1138 CRISPR screens"/>
</dbReference>
<dbReference type="ChiTaRS" id="CALHM2">
    <property type="organism name" value="human"/>
</dbReference>
<dbReference type="GenomeRNAi" id="51063"/>
<dbReference type="Pharos" id="Q9HA72">
    <property type="development level" value="Tdark"/>
</dbReference>
<dbReference type="PRO" id="PR:Q9HA72"/>
<dbReference type="Proteomes" id="UP000005640">
    <property type="component" value="Chromosome 10"/>
</dbReference>
<dbReference type="RNAct" id="Q9HA72">
    <property type="molecule type" value="protein"/>
</dbReference>
<dbReference type="Bgee" id="ENSG00000138172">
    <property type="expression patterns" value="Expressed in granulocyte and 191 other cell types or tissues"/>
</dbReference>
<dbReference type="GO" id="GO:0005886">
    <property type="term" value="C:plasma membrane"/>
    <property type="evidence" value="ECO:0000250"/>
    <property type="project" value="UniProtKB"/>
</dbReference>
<dbReference type="GO" id="GO:0005261">
    <property type="term" value="F:monoatomic cation channel activity"/>
    <property type="evidence" value="ECO:0000318"/>
    <property type="project" value="GO_Central"/>
</dbReference>
<dbReference type="GO" id="GO:1904669">
    <property type="term" value="P:ATP export"/>
    <property type="evidence" value="ECO:0000314"/>
    <property type="project" value="UniProtKB"/>
</dbReference>
<dbReference type="GO" id="GO:0070509">
    <property type="term" value="P:calcium ion import"/>
    <property type="evidence" value="ECO:0000250"/>
    <property type="project" value="UniProtKB"/>
</dbReference>
<dbReference type="GO" id="GO:0043065">
    <property type="term" value="P:positive regulation of apoptotic process"/>
    <property type="evidence" value="ECO:0000314"/>
    <property type="project" value="UniProtKB"/>
</dbReference>
<dbReference type="GO" id="GO:1903978">
    <property type="term" value="P:regulation of microglial cell activation"/>
    <property type="evidence" value="ECO:0000250"/>
    <property type="project" value="UniProtKB"/>
</dbReference>
<dbReference type="GO" id="GO:0048167">
    <property type="term" value="P:regulation of synaptic plasticity"/>
    <property type="evidence" value="ECO:0000250"/>
    <property type="project" value="UniProtKB"/>
</dbReference>
<dbReference type="InterPro" id="IPR029569">
    <property type="entry name" value="CALHM"/>
</dbReference>
<dbReference type="PANTHER" id="PTHR32261">
    <property type="entry name" value="CALCIUM HOMEOSTASIS MODULATOR PROTEIN"/>
    <property type="match status" value="1"/>
</dbReference>
<dbReference type="PANTHER" id="PTHR32261:SF3">
    <property type="entry name" value="CALCIUM HOMEOSTASIS MODULATOR PROTEIN 2"/>
    <property type="match status" value="1"/>
</dbReference>
<dbReference type="Pfam" id="PF14798">
    <property type="entry name" value="Ca_hom_mod"/>
    <property type="match status" value="1"/>
</dbReference>
<organism>
    <name type="scientific">Homo sapiens</name>
    <name type="common">Human</name>
    <dbReference type="NCBI Taxonomy" id="9606"/>
    <lineage>
        <taxon>Eukaryota</taxon>
        <taxon>Metazoa</taxon>
        <taxon>Chordata</taxon>
        <taxon>Craniata</taxon>
        <taxon>Vertebrata</taxon>
        <taxon>Euteleostomi</taxon>
        <taxon>Mammalia</taxon>
        <taxon>Eutheria</taxon>
        <taxon>Euarchontoglires</taxon>
        <taxon>Primates</taxon>
        <taxon>Haplorrhini</taxon>
        <taxon>Catarrhini</taxon>
        <taxon>Hominidae</taxon>
        <taxon>Homo</taxon>
    </lineage>
</organism>
<name>CAHM2_HUMAN</name>
<evidence type="ECO:0000250" key="1">
    <source>
        <dbReference type="UniProtKB" id="Q8VEC4"/>
    </source>
</evidence>
<evidence type="ECO:0000255" key="2"/>
<evidence type="ECO:0000269" key="3">
    <source>
    </source>
</evidence>
<evidence type="ECO:0000269" key="4">
    <source>
    </source>
</evidence>
<evidence type="ECO:0000269" key="5">
    <source>
    </source>
</evidence>
<evidence type="ECO:0000269" key="6">
    <source>
    </source>
</evidence>
<evidence type="ECO:0000303" key="7">
    <source>
    </source>
</evidence>
<evidence type="ECO:0000303" key="8">
    <source>
    </source>
</evidence>
<evidence type="ECO:0000303" key="9">
    <source ref="2"/>
</evidence>
<evidence type="ECO:0000305" key="10"/>
<evidence type="ECO:0000305" key="11">
    <source>
    </source>
</evidence>
<evidence type="ECO:0000305" key="12">
    <source>
    </source>
</evidence>
<evidence type="ECO:0000305" key="13">
    <source>
    </source>
</evidence>
<evidence type="ECO:0000312" key="14">
    <source>
        <dbReference type="HGNC" id="HGNC:23493"/>
    </source>
</evidence>
<evidence type="ECO:0000312" key="15">
    <source>
        <dbReference type="PDB" id="6VAI"/>
    </source>
</evidence>
<evidence type="ECO:0007744" key="16">
    <source>
        <dbReference type="PDB" id="6UIV"/>
    </source>
</evidence>
<evidence type="ECO:0007829" key="17">
    <source>
        <dbReference type="PDB" id="6LMU"/>
    </source>
</evidence>
<evidence type="ECO:0007829" key="18">
    <source>
        <dbReference type="PDB" id="6UIW"/>
    </source>
</evidence>
<evidence type="ECO:0007829" key="19">
    <source>
        <dbReference type="PDB" id="8RMK"/>
    </source>
</evidence>